<sequence length="360" mass="40668">MSRVYNFSAGPAAIPEEVLFTVRDELLDWHGIGMSIAEVSHRGEEFIGVAEEAERDLRELLAVPESYHILFLQGGSRLQFAMVPMNLLANHKKAVYIDSGVWSNLAIREAKNYCDPHLATNAKELNYTGIPDQATWDMPNEAAYFYYVDNETVNGIEFPFIPDTHLTLVCDMSSNLLSRPFDVSRYGLIFACAQKNMGLAGLTIVIVHDDLLKRSPLPTTPSYLQYALHAKERSFINTPPTFAWYLAGLIFKWVKNQGGVAVLAERNQRKAAKLYKFIDKSNFFDNPINPTYRSRMNVIFRLADERLNSLFLKEATENGLANLKGHRLLGGMRASIYNAMTEEGVDALINFMGQFEKRHG</sequence>
<feature type="chain" id="PRO_1000097210" description="Phosphoserine aminotransferase">
    <location>
        <begin position="1"/>
        <end position="360"/>
    </location>
</feature>
<feature type="binding site" evidence="1">
    <location>
        <position position="42"/>
    </location>
    <ligand>
        <name>L-glutamate</name>
        <dbReference type="ChEBI" id="CHEBI:29985"/>
    </ligand>
</feature>
<feature type="binding site" evidence="1">
    <location>
        <position position="102"/>
    </location>
    <ligand>
        <name>pyridoxal 5'-phosphate</name>
        <dbReference type="ChEBI" id="CHEBI:597326"/>
    </ligand>
</feature>
<feature type="binding site" evidence="1">
    <location>
        <position position="152"/>
    </location>
    <ligand>
        <name>pyridoxal 5'-phosphate</name>
        <dbReference type="ChEBI" id="CHEBI:597326"/>
    </ligand>
</feature>
<feature type="binding site" evidence="1">
    <location>
        <position position="171"/>
    </location>
    <ligand>
        <name>pyridoxal 5'-phosphate</name>
        <dbReference type="ChEBI" id="CHEBI:597326"/>
    </ligand>
</feature>
<feature type="binding site" evidence="1">
    <location>
        <position position="194"/>
    </location>
    <ligand>
        <name>pyridoxal 5'-phosphate</name>
        <dbReference type="ChEBI" id="CHEBI:597326"/>
    </ligand>
</feature>
<feature type="binding site" evidence="1">
    <location>
        <begin position="237"/>
        <end position="238"/>
    </location>
    <ligand>
        <name>pyridoxal 5'-phosphate</name>
        <dbReference type="ChEBI" id="CHEBI:597326"/>
    </ligand>
</feature>
<feature type="modified residue" description="N6-(pyridoxal phosphate)lysine" evidence="1">
    <location>
        <position position="195"/>
    </location>
</feature>
<reference key="1">
    <citation type="journal article" date="2009" name="Infect. Immun.">
        <title>Comparative genomics reveal extensive transposon-mediated genomic plasticity and diversity among potential effector proteins within the genus Coxiella.</title>
        <authorList>
            <person name="Beare P.A."/>
            <person name="Unsworth N."/>
            <person name="Andoh M."/>
            <person name="Voth D.E."/>
            <person name="Omsland A."/>
            <person name="Gilk S.D."/>
            <person name="Williams K.P."/>
            <person name="Sobral B.W."/>
            <person name="Kupko J.J. III"/>
            <person name="Porcella S.F."/>
            <person name="Samuel J.E."/>
            <person name="Heinzen R.A."/>
        </authorList>
    </citation>
    <scope>NUCLEOTIDE SEQUENCE [LARGE SCALE GENOMIC DNA]</scope>
    <source>
        <strain>CbuK_Q154</strain>
    </source>
</reference>
<dbReference type="EC" id="2.6.1.52" evidence="1"/>
<dbReference type="EMBL" id="CP001020">
    <property type="protein sequence ID" value="ACJ20492.1"/>
    <property type="molecule type" value="Genomic_DNA"/>
</dbReference>
<dbReference type="RefSeq" id="WP_005771164.1">
    <property type="nucleotide sequence ID" value="NC_011528.1"/>
</dbReference>
<dbReference type="SMR" id="B6J893"/>
<dbReference type="KEGG" id="cbc:CbuK_1311"/>
<dbReference type="HOGENOM" id="CLU_034866_0_2_6"/>
<dbReference type="UniPathway" id="UPA00135">
    <property type="reaction ID" value="UER00197"/>
</dbReference>
<dbReference type="UniPathway" id="UPA00244">
    <property type="reaction ID" value="UER00311"/>
</dbReference>
<dbReference type="GO" id="GO:0005737">
    <property type="term" value="C:cytoplasm"/>
    <property type="evidence" value="ECO:0007669"/>
    <property type="project" value="UniProtKB-SubCell"/>
</dbReference>
<dbReference type="GO" id="GO:0004648">
    <property type="term" value="F:O-phospho-L-serine:2-oxoglutarate aminotransferase activity"/>
    <property type="evidence" value="ECO:0007669"/>
    <property type="project" value="UniProtKB-UniRule"/>
</dbReference>
<dbReference type="GO" id="GO:0030170">
    <property type="term" value="F:pyridoxal phosphate binding"/>
    <property type="evidence" value="ECO:0007669"/>
    <property type="project" value="UniProtKB-UniRule"/>
</dbReference>
<dbReference type="GO" id="GO:0006564">
    <property type="term" value="P:L-serine biosynthetic process"/>
    <property type="evidence" value="ECO:0007669"/>
    <property type="project" value="UniProtKB-UniRule"/>
</dbReference>
<dbReference type="GO" id="GO:0008615">
    <property type="term" value="P:pyridoxine biosynthetic process"/>
    <property type="evidence" value="ECO:0007669"/>
    <property type="project" value="UniProtKB-UniRule"/>
</dbReference>
<dbReference type="FunFam" id="3.40.640.10:FF:000010">
    <property type="entry name" value="Phosphoserine aminotransferase"/>
    <property type="match status" value="1"/>
</dbReference>
<dbReference type="FunFam" id="3.90.1150.10:FF:000006">
    <property type="entry name" value="Phosphoserine aminotransferase"/>
    <property type="match status" value="1"/>
</dbReference>
<dbReference type="Gene3D" id="3.90.1150.10">
    <property type="entry name" value="Aspartate Aminotransferase, domain 1"/>
    <property type="match status" value="1"/>
</dbReference>
<dbReference type="Gene3D" id="3.40.640.10">
    <property type="entry name" value="Type I PLP-dependent aspartate aminotransferase-like (Major domain)"/>
    <property type="match status" value="1"/>
</dbReference>
<dbReference type="HAMAP" id="MF_00160">
    <property type="entry name" value="SerC_aminotrans_5"/>
    <property type="match status" value="1"/>
</dbReference>
<dbReference type="InterPro" id="IPR000192">
    <property type="entry name" value="Aminotrans_V_dom"/>
</dbReference>
<dbReference type="InterPro" id="IPR020578">
    <property type="entry name" value="Aminotrans_V_PyrdxlP_BS"/>
</dbReference>
<dbReference type="InterPro" id="IPR022278">
    <property type="entry name" value="Pser_aminoTfrase"/>
</dbReference>
<dbReference type="InterPro" id="IPR015424">
    <property type="entry name" value="PyrdxlP-dep_Trfase"/>
</dbReference>
<dbReference type="InterPro" id="IPR015421">
    <property type="entry name" value="PyrdxlP-dep_Trfase_major"/>
</dbReference>
<dbReference type="InterPro" id="IPR015422">
    <property type="entry name" value="PyrdxlP-dep_Trfase_small"/>
</dbReference>
<dbReference type="NCBIfam" id="NF003764">
    <property type="entry name" value="PRK05355.1"/>
    <property type="match status" value="1"/>
</dbReference>
<dbReference type="NCBIfam" id="TIGR01364">
    <property type="entry name" value="serC_1"/>
    <property type="match status" value="1"/>
</dbReference>
<dbReference type="PANTHER" id="PTHR43247">
    <property type="entry name" value="PHOSPHOSERINE AMINOTRANSFERASE"/>
    <property type="match status" value="1"/>
</dbReference>
<dbReference type="PANTHER" id="PTHR43247:SF1">
    <property type="entry name" value="PHOSPHOSERINE AMINOTRANSFERASE"/>
    <property type="match status" value="1"/>
</dbReference>
<dbReference type="Pfam" id="PF00266">
    <property type="entry name" value="Aminotran_5"/>
    <property type="match status" value="1"/>
</dbReference>
<dbReference type="PIRSF" id="PIRSF000525">
    <property type="entry name" value="SerC"/>
    <property type="match status" value="1"/>
</dbReference>
<dbReference type="SUPFAM" id="SSF53383">
    <property type="entry name" value="PLP-dependent transferases"/>
    <property type="match status" value="1"/>
</dbReference>
<dbReference type="PROSITE" id="PS00595">
    <property type="entry name" value="AA_TRANSFER_CLASS_5"/>
    <property type="match status" value="1"/>
</dbReference>
<gene>
    <name evidence="1" type="primary">serC</name>
    <name type="ordered locus">CbuK_1311</name>
</gene>
<comment type="function">
    <text evidence="1">Catalyzes the reversible conversion of 3-phosphohydroxypyruvate to phosphoserine and of 3-hydroxy-2-oxo-4-phosphonooxybutanoate to phosphohydroxythreonine.</text>
</comment>
<comment type="catalytic activity">
    <reaction evidence="1">
        <text>O-phospho-L-serine + 2-oxoglutarate = 3-phosphooxypyruvate + L-glutamate</text>
        <dbReference type="Rhea" id="RHEA:14329"/>
        <dbReference type="ChEBI" id="CHEBI:16810"/>
        <dbReference type="ChEBI" id="CHEBI:18110"/>
        <dbReference type="ChEBI" id="CHEBI:29985"/>
        <dbReference type="ChEBI" id="CHEBI:57524"/>
        <dbReference type="EC" id="2.6.1.52"/>
    </reaction>
</comment>
<comment type="catalytic activity">
    <reaction evidence="1">
        <text>4-(phosphooxy)-L-threonine + 2-oxoglutarate = (R)-3-hydroxy-2-oxo-4-phosphooxybutanoate + L-glutamate</text>
        <dbReference type="Rhea" id="RHEA:16573"/>
        <dbReference type="ChEBI" id="CHEBI:16810"/>
        <dbReference type="ChEBI" id="CHEBI:29985"/>
        <dbReference type="ChEBI" id="CHEBI:58452"/>
        <dbReference type="ChEBI" id="CHEBI:58538"/>
        <dbReference type="EC" id="2.6.1.52"/>
    </reaction>
</comment>
<comment type="cofactor">
    <cofactor evidence="1">
        <name>pyridoxal 5'-phosphate</name>
        <dbReference type="ChEBI" id="CHEBI:597326"/>
    </cofactor>
    <text evidence="1">Binds 1 pyridoxal phosphate per subunit.</text>
</comment>
<comment type="pathway">
    <text evidence="1">Amino-acid biosynthesis; L-serine biosynthesis; L-serine from 3-phospho-D-glycerate: step 2/3.</text>
</comment>
<comment type="pathway">
    <text evidence="1">Cofactor biosynthesis; pyridoxine 5'-phosphate biosynthesis; pyridoxine 5'-phosphate from D-erythrose 4-phosphate: step 3/5.</text>
</comment>
<comment type="subunit">
    <text evidence="1">Homodimer.</text>
</comment>
<comment type="subcellular location">
    <subcellularLocation>
        <location evidence="1">Cytoplasm</location>
    </subcellularLocation>
</comment>
<comment type="similarity">
    <text evidence="1">Belongs to the class-V pyridoxal-phosphate-dependent aminotransferase family. SerC subfamily.</text>
</comment>
<accession>B6J893</accession>
<protein>
    <recommendedName>
        <fullName evidence="1">Phosphoserine aminotransferase</fullName>
        <ecNumber evidence="1">2.6.1.52</ecNumber>
    </recommendedName>
    <alternativeName>
        <fullName evidence="1">Phosphohydroxythreonine aminotransferase</fullName>
        <shortName evidence="1">PSAT</shortName>
    </alternativeName>
</protein>
<name>SERC_COXB1</name>
<organism>
    <name type="scientific">Coxiella burnetii (strain CbuK_Q154)</name>
    <name type="common">Coxiella burnetii (strain Q154)</name>
    <dbReference type="NCBI Taxonomy" id="434924"/>
    <lineage>
        <taxon>Bacteria</taxon>
        <taxon>Pseudomonadati</taxon>
        <taxon>Pseudomonadota</taxon>
        <taxon>Gammaproteobacteria</taxon>
        <taxon>Legionellales</taxon>
        <taxon>Coxiellaceae</taxon>
        <taxon>Coxiella</taxon>
    </lineage>
</organism>
<evidence type="ECO:0000255" key="1">
    <source>
        <dbReference type="HAMAP-Rule" id="MF_00160"/>
    </source>
</evidence>
<proteinExistence type="inferred from homology"/>
<keyword id="KW-0028">Amino-acid biosynthesis</keyword>
<keyword id="KW-0032">Aminotransferase</keyword>
<keyword id="KW-0963">Cytoplasm</keyword>
<keyword id="KW-0663">Pyridoxal phosphate</keyword>
<keyword id="KW-0664">Pyridoxine biosynthesis</keyword>
<keyword id="KW-0718">Serine biosynthesis</keyword>
<keyword id="KW-0808">Transferase</keyword>